<reference key="1">
    <citation type="journal article" date="2002" name="J. Biol. Chem.">
        <title>Punctin, a novel ADAMTS-like molecule, ADAMTSL-1, in extracellular matrix.</title>
        <authorList>
            <person name="Hirohata S."/>
            <person name="Wang L.W."/>
            <person name="Miyagi M."/>
            <person name="Yan L."/>
            <person name="Seldin M.F."/>
            <person name="Keene D.R."/>
            <person name="Crabb J.W."/>
            <person name="Apte S.S."/>
        </authorList>
    </citation>
    <scope>NUCLEOTIDE SEQUENCE [MRNA] (ISOFORM 1)</scope>
    <scope>PARTIAL PROTEIN SEQUENCE</scope>
    <scope>SUBUNIT</scope>
    <scope>SUBCELLULAR LOCATION</scope>
    <scope>TISSUE SPECIFICITY</scope>
    <scope>GLYCOSYLATION</scope>
    <scope>MASS SPECTROMETRY</scope>
    <scope>DISULFIDE BONDS</scope>
</reference>
<reference key="2">
    <citation type="journal article" date="2003" name="Genome Res.">
        <title>The secreted protein discovery initiative (SPDI), a large-scale effort to identify novel human secreted and transmembrane proteins: a bioinformatics assessment.</title>
        <authorList>
            <person name="Clark H.F."/>
            <person name="Gurney A.L."/>
            <person name="Abaya E."/>
            <person name="Baker K."/>
            <person name="Baldwin D.T."/>
            <person name="Brush J."/>
            <person name="Chen J."/>
            <person name="Chow B."/>
            <person name="Chui C."/>
            <person name="Crowley C."/>
            <person name="Currell B."/>
            <person name="Deuel B."/>
            <person name="Dowd P."/>
            <person name="Eaton D."/>
            <person name="Foster J.S."/>
            <person name="Grimaldi C."/>
            <person name="Gu Q."/>
            <person name="Hass P.E."/>
            <person name="Heldens S."/>
            <person name="Huang A."/>
            <person name="Kim H.S."/>
            <person name="Klimowski L."/>
            <person name="Jin Y."/>
            <person name="Johnson S."/>
            <person name="Lee J."/>
            <person name="Lewis L."/>
            <person name="Liao D."/>
            <person name="Mark M.R."/>
            <person name="Robbie E."/>
            <person name="Sanchez C."/>
            <person name="Schoenfeld J."/>
            <person name="Seshagiri S."/>
            <person name="Simmons L."/>
            <person name="Singh J."/>
            <person name="Smith V."/>
            <person name="Stinson J."/>
            <person name="Vagts A."/>
            <person name="Vandlen R.L."/>
            <person name="Watanabe C."/>
            <person name="Wieand D."/>
            <person name="Woods K."/>
            <person name="Xie M.-H."/>
            <person name="Yansura D.G."/>
            <person name="Yi S."/>
            <person name="Yu G."/>
            <person name="Yuan J."/>
            <person name="Zhang M."/>
            <person name="Zhang Z."/>
            <person name="Goddard A.D."/>
            <person name="Wood W.I."/>
            <person name="Godowski P.J."/>
            <person name="Gray A.M."/>
        </authorList>
    </citation>
    <scope>NUCLEOTIDE SEQUENCE [LARGE SCALE MRNA] (ISOFORMS 1 AND 5)</scope>
    <source>
        <tissue>Prostate</tissue>
    </source>
</reference>
<reference key="3">
    <citation type="journal article" date="2004" name="Nat. Genet.">
        <title>Complete sequencing and characterization of 21,243 full-length human cDNAs.</title>
        <authorList>
            <person name="Ota T."/>
            <person name="Suzuki Y."/>
            <person name="Nishikawa T."/>
            <person name="Otsuki T."/>
            <person name="Sugiyama T."/>
            <person name="Irie R."/>
            <person name="Wakamatsu A."/>
            <person name="Hayashi K."/>
            <person name="Sato H."/>
            <person name="Nagai K."/>
            <person name="Kimura K."/>
            <person name="Makita H."/>
            <person name="Sekine M."/>
            <person name="Obayashi M."/>
            <person name="Nishi T."/>
            <person name="Shibahara T."/>
            <person name="Tanaka T."/>
            <person name="Ishii S."/>
            <person name="Yamamoto J."/>
            <person name="Saito K."/>
            <person name="Kawai Y."/>
            <person name="Isono Y."/>
            <person name="Nakamura Y."/>
            <person name="Nagahari K."/>
            <person name="Murakami K."/>
            <person name="Yasuda T."/>
            <person name="Iwayanagi T."/>
            <person name="Wagatsuma M."/>
            <person name="Shiratori A."/>
            <person name="Sudo H."/>
            <person name="Hosoiri T."/>
            <person name="Kaku Y."/>
            <person name="Kodaira H."/>
            <person name="Kondo H."/>
            <person name="Sugawara M."/>
            <person name="Takahashi M."/>
            <person name="Kanda K."/>
            <person name="Yokoi T."/>
            <person name="Furuya T."/>
            <person name="Kikkawa E."/>
            <person name="Omura Y."/>
            <person name="Abe K."/>
            <person name="Kamihara K."/>
            <person name="Katsuta N."/>
            <person name="Sato K."/>
            <person name="Tanikawa M."/>
            <person name="Yamazaki M."/>
            <person name="Ninomiya K."/>
            <person name="Ishibashi T."/>
            <person name="Yamashita H."/>
            <person name="Murakawa K."/>
            <person name="Fujimori K."/>
            <person name="Tanai H."/>
            <person name="Kimata M."/>
            <person name="Watanabe M."/>
            <person name="Hiraoka S."/>
            <person name="Chiba Y."/>
            <person name="Ishida S."/>
            <person name="Ono Y."/>
            <person name="Takiguchi S."/>
            <person name="Watanabe S."/>
            <person name="Yosida M."/>
            <person name="Hotuta T."/>
            <person name="Kusano J."/>
            <person name="Kanehori K."/>
            <person name="Takahashi-Fujii A."/>
            <person name="Hara H."/>
            <person name="Tanase T.-O."/>
            <person name="Nomura Y."/>
            <person name="Togiya S."/>
            <person name="Komai F."/>
            <person name="Hara R."/>
            <person name="Takeuchi K."/>
            <person name="Arita M."/>
            <person name="Imose N."/>
            <person name="Musashino K."/>
            <person name="Yuuki H."/>
            <person name="Oshima A."/>
            <person name="Sasaki N."/>
            <person name="Aotsuka S."/>
            <person name="Yoshikawa Y."/>
            <person name="Matsunawa H."/>
            <person name="Ichihara T."/>
            <person name="Shiohata N."/>
            <person name="Sano S."/>
            <person name="Moriya S."/>
            <person name="Momiyama H."/>
            <person name="Satoh N."/>
            <person name="Takami S."/>
            <person name="Terashima Y."/>
            <person name="Suzuki O."/>
            <person name="Nakagawa S."/>
            <person name="Senoh A."/>
            <person name="Mizoguchi H."/>
            <person name="Goto Y."/>
            <person name="Shimizu F."/>
            <person name="Wakebe H."/>
            <person name="Hishigaki H."/>
            <person name="Watanabe T."/>
            <person name="Sugiyama A."/>
            <person name="Takemoto M."/>
            <person name="Kawakami B."/>
            <person name="Yamazaki M."/>
            <person name="Watanabe K."/>
            <person name="Kumagai A."/>
            <person name="Itakura S."/>
            <person name="Fukuzumi Y."/>
            <person name="Fujimori Y."/>
            <person name="Komiyama M."/>
            <person name="Tashiro H."/>
            <person name="Tanigami A."/>
            <person name="Fujiwara T."/>
            <person name="Ono T."/>
            <person name="Yamada K."/>
            <person name="Fujii Y."/>
            <person name="Ozaki K."/>
            <person name="Hirao M."/>
            <person name="Ohmori Y."/>
            <person name="Kawabata A."/>
            <person name="Hikiji T."/>
            <person name="Kobatake N."/>
            <person name="Inagaki H."/>
            <person name="Ikema Y."/>
            <person name="Okamoto S."/>
            <person name="Okitani R."/>
            <person name="Kawakami T."/>
            <person name="Noguchi S."/>
            <person name="Itoh T."/>
            <person name="Shigeta K."/>
            <person name="Senba T."/>
            <person name="Matsumura K."/>
            <person name="Nakajima Y."/>
            <person name="Mizuno T."/>
            <person name="Morinaga M."/>
            <person name="Sasaki M."/>
            <person name="Togashi T."/>
            <person name="Oyama M."/>
            <person name="Hata H."/>
            <person name="Watanabe M."/>
            <person name="Komatsu T."/>
            <person name="Mizushima-Sugano J."/>
            <person name="Satoh T."/>
            <person name="Shirai Y."/>
            <person name="Takahashi Y."/>
            <person name="Nakagawa K."/>
            <person name="Okumura K."/>
            <person name="Nagase T."/>
            <person name="Nomura N."/>
            <person name="Kikuchi H."/>
            <person name="Masuho Y."/>
            <person name="Yamashita R."/>
            <person name="Nakai K."/>
            <person name="Yada T."/>
            <person name="Nakamura Y."/>
            <person name="Ohara O."/>
            <person name="Isogai T."/>
            <person name="Sugano S."/>
        </authorList>
    </citation>
    <scope>NUCLEOTIDE SEQUENCE [LARGE SCALE MRNA] (ISOFORM 1)</scope>
</reference>
<reference key="4">
    <citation type="journal article" date="2004" name="Nature">
        <title>DNA sequence and analysis of human chromosome 9.</title>
        <authorList>
            <person name="Humphray S.J."/>
            <person name="Oliver K."/>
            <person name="Hunt A.R."/>
            <person name="Plumb R.W."/>
            <person name="Loveland J.E."/>
            <person name="Howe K.L."/>
            <person name="Andrews T.D."/>
            <person name="Searle S."/>
            <person name="Hunt S.E."/>
            <person name="Scott C.E."/>
            <person name="Jones M.C."/>
            <person name="Ainscough R."/>
            <person name="Almeida J.P."/>
            <person name="Ambrose K.D."/>
            <person name="Ashwell R.I.S."/>
            <person name="Babbage A.K."/>
            <person name="Babbage S."/>
            <person name="Bagguley C.L."/>
            <person name="Bailey J."/>
            <person name="Banerjee R."/>
            <person name="Barker D.J."/>
            <person name="Barlow K.F."/>
            <person name="Bates K."/>
            <person name="Beasley H."/>
            <person name="Beasley O."/>
            <person name="Bird C.P."/>
            <person name="Bray-Allen S."/>
            <person name="Brown A.J."/>
            <person name="Brown J.Y."/>
            <person name="Burford D."/>
            <person name="Burrill W."/>
            <person name="Burton J."/>
            <person name="Carder C."/>
            <person name="Carter N.P."/>
            <person name="Chapman J.C."/>
            <person name="Chen Y."/>
            <person name="Clarke G."/>
            <person name="Clark S.Y."/>
            <person name="Clee C.M."/>
            <person name="Clegg S."/>
            <person name="Collier R.E."/>
            <person name="Corby N."/>
            <person name="Crosier M."/>
            <person name="Cummings A.T."/>
            <person name="Davies J."/>
            <person name="Dhami P."/>
            <person name="Dunn M."/>
            <person name="Dutta I."/>
            <person name="Dyer L.W."/>
            <person name="Earthrowl M.E."/>
            <person name="Faulkner L."/>
            <person name="Fleming C.J."/>
            <person name="Frankish A."/>
            <person name="Frankland J.A."/>
            <person name="French L."/>
            <person name="Fricker D.G."/>
            <person name="Garner P."/>
            <person name="Garnett J."/>
            <person name="Ghori J."/>
            <person name="Gilbert J.G.R."/>
            <person name="Glison C."/>
            <person name="Grafham D.V."/>
            <person name="Gribble S."/>
            <person name="Griffiths C."/>
            <person name="Griffiths-Jones S."/>
            <person name="Grocock R."/>
            <person name="Guy J."/>
            <person name="Hall R.E."/>
            <person name="Hammond S."/>
            <person name="Harley J.L."/>
            <person name="Harrison E.S.I."/>
            <person name="Hart E.A."/>
            <person name="Heath P.D."/>
            <person name="Henderson C.D."/>
            <person name="Hopkins B.L."/>
            <person name="Howard P.J."/>
            <person name="Howden P.J."/>
            <person name="Huckle E."/>
            <person name="Johnson C."/>
            <person name="Johnson D."/>
            <person name="Joy A.A."/>
            <person name="Kay M."/>
            <person name="Keenan S."/>
            <person name="Kershaw J.K."/>
            <person name="Kimberley A.M."/>
            <person name="King A."/>
            <person name="Knights A."/>
            <person name="Laird G.K."/>
            <person name="Langford C."/>
            <person name="Lawlor S."/>
            <person name="Leongamornlert D.A."/>
            <person name="Leversha M."/>
            <person name="Lloyd C."/>
            <person name="Lloyd D.M."/>
            <person name="Lovell J."/>
            <person name="Martin S."/>
            <person name="Mashreghi-Mohammadi M."/>
            <person name="Matthews L."/>
            <person name="McLaren S."/>
            <person name="McLay K.E."/>
            <person name="McMurray A."/>
            <person name="Milne S."/>
            <person name="Nickerson T."/>
            <person name="Nisbett J."/>
            <person name="Nordsiek G."/>
            <person name="Pearce A.V."/>
            <person name="Peck A.I."/>
            <person name="Porter K.M."/>
            <person name="Pandian R."/>
            <person name="Pelan S."/>
            <person name="Phillimore B."/>
            <person name="Povey S."/>
            <person name="Ramsey Y."/>
            <person name="Rand V."/>
            <person name="Scharfe M."/>
            <person name="Sehra H.K."/>
            <person name="Shownkeen R."/>
            <person name="Sims S.K."/>
            <person name="Skuce C.D."/>
            <person name="Smith M."/>
            <person name="Steward C.A."/>
            <person name="Swarbreck D."/>
            <person name="Sycamore N."/>
            <person name="Tester J."/>
            <person name="Thorpe A."/>
            <person name="Tracey A."/>
            <person name="Tromans A."/>
            <person name="Thomas D.W."/>
            <person name="Wall M."/>
            <person name="Wallis J.M."/>
            <person name="West A.P."/>
            <person name="Whitehead S.L."/>
            <person name="Willey D.L."/>
            <person name="Williams S.A."/>
            <person name="Wilming L."/>
            <person name="Wray P.W."/>
            <person name="Young L."/>
            <person name="Ashurst J.L."/>
            <person name="Coulson A."/>
            <person name="Blocker H."/>
            <person name="Durbin R.M."/>
            <person name="Sulston J.E."/>
            <person name="Hubbard T."/>
            <person name="Jackson M.J."/>
            <person name="Bentley D.R."/>
            <person name="Beck S."/>
            <person name="Rogers J."/>
            <person name="Dunham I."/>
        </authorList>
    </citation>
    <scope>NUCLEOTIDE SEQUENCE [LARGE SCALE GENOMIC DNA]</scope>
</reference>
<reference key="5">
    <citation type="submission" date="2005-09" db="EMBL/GenBank/DDBJ databases">
        <authorList>
            <person name="Mural R.J."/>
            <person name="Istrail S."/>
            <person name="Sutton G.G."/>
            <person name="Florea L."/>
            <person name="Halpern A.L."/>
            <person name="Mobarry C.M."/>
            <person name="Lippert R."/>
            <person name="Walenz B."/>
            <person name="Shatkay H."/>
            <person name="Dew I."/>
            <person name="Miller J.R."/>
            <person name="Flanigan M.J."/>
            <person name="Edwards N.J."/>
            <person name="Bolanos R."/>
            <person name="Fasulo D."/>
            <person name="Halldorsson B.V."/>
            <person name="Hannenhalli S."/>
            <person name="Turner R."/>
            <person name="Yooseph S."/>
            <person name="Lu F."/>
            <person name="Nusskern D.R."/>
            <person name="Shue B.C."/>
            <person name="Zheng X.H."/>
            <person name="Zhong F."/>
            <person name="Delcher A.L."/>
            <person name="Huson D.H."/>
            <person name="Kravitz S.A."/>
            <person name="Mouchard L."/>
            <person name="Reinert K."/>
            <person name="Remington K.A."/>
            <person name="Clark A.G."/>
            <person name="Waterman M.S."/>
            <person name="Eichler E.E."/>
            <person name="Adams M.D."/>
            <person name="Hunkapiller M.W."/>
            <person name="Myers E.W."/>
            <person name="Venter J.C."/>
        </authorList>
    </citation>
    <scope>NUCLEOTIDE SEQUENCE [LARGE SCALE GENOMIC DNA]</scope>
</reference>
<reference key="6">
    <citation type="journal article" date="2004" name="Genome Res.">
        <title>The status, quality, and expansion of the NIH full-length cDNA project: the Mammalian Gene Collection (MGC).</title>
        <authorList>
            <consortium name="The MGC Project Team"/>
        </authorList>
    </citation>
    <scope>NUCLEOTIDE SEQUENCE [LARGE SCALE MRNA] (ISOFORMS 2 AND 6)</scope>
    <source>
        <tissue>Lung</tissue>
    </source>
</reference>
<reference key="7">
    <citation type="submission" date="2000-03" db="EMBL/GenBank/DDBJ databases">
        <authorList>
            <person name="Mao Y."/>
            <person name="Xie Y."/>
            <person name="Zhou Z."/>
            <person name="Zhao W."/>
            <person name="Zhao S."/>
            <person name="Wang W."/>
            <person name="Huang Y."/>
            <person name="Wang S."/>
            <person name="Tang R."/>
            <person name="Chen X."/>
            <person name="Wu C."/>
        </authorList>
    </citation>
    <scope>NUCLEOTIDE SEQUENCE [MRNA] OF 214-1762 (ISOFORM 4)</scope>
</reference>
<reference key="8">
    <citation type="journal article" date="2007" name="J. Biol. Chem.">
        <title>O-fucosylation of thrombospondin type 1 repeats in ADAMTS-like-1/punctin-1 regulates secretion: implications for the ADAMTS superfamily.</title>
        <authorList>
            <person name="Wang L.W."/>
            <person name="Dlugosz M."/>
            <person name="Somerville R.P."/>
            <person name="Raed M."/>
            <person name="Haltiwanger R.S."/>
            <person name="Apte S.S."/>
        </authorList>
    </citation>
    <scope>GLYCOSYLATION AT ASN-251; THR-312; SER-391 AND THR-451</scope>
    <scope>SUBCELLULAR LOCATION</scope>
    <scope>IDENTIFICATION BY MASS SPECTROMETRY</scope>
</reference>
<reference key="9">
    <citation type="journal article" date="2009" name="J. Biol. Chem.">
        <title>Post-translational modification of thrombospondin type-1 repeats in ADAMTS-like 1/punctin-1 by C-mannosylation of tryptophan.</title>
        <authorList>
            <person name="Wang L.W."/>
            <person name="Leonhard-Melief C."/>
            <person name="Haltiwanger R.S."/>
            <person name="Apte S.S."/>
        </authorList>
    </citation>
    <scope>GLYCOSYLATION AT TRP-39; TRP-42 AND THR-48</scope>
    <scope>LACK OF GLYCOSYLATION AT TRP-36</scope>
    <scope>SUBCELLULAR LOCATION</scope>
    <scope>MUTAGENESIS OF TRP-36; TRP-39; TRP-42; TRP-385 AND TRP-445</scope>
    <scope>IDENTIFICATION BY MASS SPECTROMETRY</scope>
</reference>
<accession>Q8N6G6</accession>
<accession>A6PVN1</accession>
<accession>A8K7E1</accession>
<accession>Q496M6</accession>
<accession>Q496M8</accession>
<accession>Q5T708</accession>
<accession>Q5VZT8</accession>
<accession>Q8NAI9</accession>
<accession>Q96RW4</accession>
<accession>Q9BXY3</accession>
<sequence>MECCRRATPGTLLLFLAFLLLSSRTARSEEDRDGLWDAWGPWSECSRTCGGGASYSLRRCLSSKSCEGRNIRYRTCSNVDCPPEAGDFRAQQCSAHNDVKHHGQFYEWLPVSNDPDNPCSLKCQAKGTTLVVELAPKVLDGTRCYTESLDMCISGLCQIVGCDHQLGSTVKEDNCGVCNGDGSTCRLVRGQYKSQLSATKSDDTVVAIPYGSRHIRLVLKGPDHLYLETKTLQGTKGENSLSSTGTFLVDNSSVDFQKFPDKEILRMAGPLTADFIVKIRNSGSADSTVQFIFYQPIIHRWRETDFFPCSATCGGGYQLTSAECYDLRSNRVVADQYCHYYPENIKPKPKLQECNLDPCPASDGYKQIMPYDLYHPLPRWEATPWTACSSSCGGGIQSRAVSCVEEDIQGHVTSVEEWKCMYTPKMPIAQPCNIFDCPKWLAQEWSPCTVTCGQGLRYRVVLCIDHRGMHTGGCSPKTKPHIKEECIVPTPCYKPKEKLPVEAKLPWFKQAQELEEGAAVSEEPSFIPEAWSACTVTCGVGTQVRIVRCQVLLSFSQSVADLPIDECEGPKPASQRACYAGPCSGEIPEFNPDETDGLFGGLQDFDELYDWEYEGFTKCSESCGGGVQEAVVSCLNKQTREPAEENLCVTSRRPPQLLKSCNLDPCPARWEIGKWSPCSLTCGVGLQTRDVFCSHLLSREMNETVILADELCRQPKPSTVQACNRFNCPPAWYPAQWQPCSRTCGGGVQKREVLCKQRMADGSFLELPETFCSASKPACQQACKKDDCPSEWLLSDWTECSTSCGEGTQTRSAICRKMLKTGLSTVVNSTLCPPLPFSSSIRPCMLATCARPGRPSTKHSPHIAAARKVYIQTRRQRKLHFVVGGFAYLLPKTAVVLRCPARRVRKPLITWEKDGQHLISSTHVTVAPFGYLKIHRLKPSDAGVYTCSAGPAREHFVIKLIGGNRKLVARPLSPRSEEEVLAGRKGGPKEALQTHKHQNGIFSNGSKAEKRGLAANPGSRYDDLVSRLLEQGGWPGELLASWEAQDSAERNTTSEEDPGAEQVLLHLPFTMVTEQRRLDDILGNLSQQPEELRDLYSKHLVAQLAQEIFRSHLEHQDTLLKPSERRTSPVTLSPHKHVSGFSSSLRTSSTGDAGGGSRRPHRKPTILRKISAAQQLSASEVVTHLGQTVALASGTLSVLLHCEAIGHPRPTISWARNGEEVQFSDRILLQPDDSLQILAPVEADVGFYTCNATNALGYDSVSIAVTLAGKPLVKTSRMTVINTEKPAVTVDIGSTIKTVQGVNVTINCQVAGVPEAEVTWFRNKSKLGSPHHLHEGSLLLTNVSSSDQGLYSCRAANLHGELTESTQLLILDPPQVPTQLEDIRALLAATGPNLPSVLTSPLGTQLVLDPGNSALLGCPIKGHPVPNITWFHGGQPIVTATGLTHHILAAGQILQVANLSGGSQGEFSCLAQNEAGVLMQKASLVIQDYWWSVDRLATCSASCGNRGVQQPRLRCLLNSTEVNPAHCAGKVRPAVQPIACNRRDCPSRWMVTSWSACTRSCGGGVQTRRVTCQKLKASGISTPVSNDMCTQVAKRPVDTQACNQQLCVEWAFSSWGQCNGPCIGPHLAVQHRQVFCQTRDGITLPSEQCSALPRPVSTQNCWSEACSVHWRVSLWTLCTATCGNYGFQSRRVECVHARTNKAVPEHLCSWGPRPANWQRCNITPCENMECRDTTRYCEKVKQLKLCQLSQFKSRCCGTCGKA</sequence>
<gene>
    <name type="primary">ADAMTSL1</name>
    <name type="synonym">ADAMTSR1</name>
    <name type="synonym">C9orf94</name>
    <name type="ORF">UNQ528/PRO1071</name>
</gene>
<dbReference type="EMBL" id="AF176313">
    <property type="protein sequence ID" value="AAK84170.1"/>
    <property type="molecule type" value="mRNA"/>
</dbReference>
<dbReference type="EMBL" id="AY358327">
    <property type="protein sequence ID" value="AAQ88693.1"/>
    <property type="molecule type" value="mRNA"/>
</dbReference>
<dbReference type="EMBL" id="AK092602">
    <property type="protein sequence ID" value="BAC03925.1"/>
    <property type="molecule type" value="mRNA"/>
</dbReference>
<dbReference type="EMBL" id="AK291956">
    <property type="protein sequence ID" value="BAF84645.1"/>
    <property type="molecule type" value="mRNA"/>
</dbReference>
<dbReference type="EMBL" id="AL158150">
    <property type="status" value="NOT_ANNOTATED_CDS"/>
    <property type="molecule type" value="Genomic_DNA"/>
</dbReference>
<dbReference type="EMBL" id="AL353895">
    <property type="status" value="NOT_ANNOTATED_CDS"/>
    <property type="molecule type" value="Genomic_DNA"/>
</dbReference>
<dbReference type="EMBL" id="AL442638">
    <property type="status" value="NOT_ANNOTATED_CDS"/>
    <property type="molecule type" value="Genomic_DNA"/>
</dbReference>
<dbReference type="EMBL" id="AL449963">
    <property type="status" value="NOT_ANNOTATED_CDS"/>
    <property type="molecule type" value="Genomic_DNA"/>
</dbReference>
<dbReference type="EMBL" id="AL591423">
    <property type="status" value="NOT_ANNOTATED_CDS"/>
    <property type="molecule type" value="Genomic_DNA"/>
</dbReference>
<dbReference type="EMBL" id="CH471071">
    <property type="protein sequence ID" value="EAW58656.1"/>
    <property type="molecule type" value="Genomic_DNA"/>
</dbReference>
<dbReference type="EMBL" id="BC030262">
    <property type="protein sequence ID" value="AAH30262.1"/>
    <property type="molecule type" value="mRNA"/>
</dbReference>
<dbReference type="EMBL" id="BC100788">
    <property type="protein sequence ID" value="AAI00789.1"/>
    <property type="status" value="ALT_FRAME"/>
    <property type="molecule type" value="mRNA"/>
</dbReference>
<dbReference type="EMBL" id="BC100790">
    <property type="protein sequence ID" value="AAI00791.1"/>
    <property type="status" value="ALT_FRAME"/>
    <property type="molecule type" value="mRNA"/>
</dbReference>
<dbReference type="EMBL" id="AF251058">
    <property type="protein sequence ID" value="AAK34948.1"/>
    <property type="status" value="ALT_INIT"/>
    <property type="molecule type" value="mRNA"/>
</dbReference>
<dbReference type="CCDS" id="CCDS47954.1">
    <molecule id="Q8N6G6-3"/>
</dbReference>
<dbReference type="CCDS" id="CCDS6485.1">
    <molecule id="Q8N6G6-1"/>
</dbReference>
<dbReference type="RefSeq" id="NP_001035362.3">
    <molecule id="Q8N6G6-3"/>
    <property type="nucleotide sequence ID" value="NM_001040272.6"/>
</dbReference>
<dbReference type="RefSeq" id="NP_443098.3">
    <molecule id="Q8N6G6-1"/>
    <property type="nucleotide sequence ID" value="NM_052866.4"/>
</dbReference>
<dbReference type="SMR" id="Q8N6G6"/>
<dbReference type="BioGRID" id="124989">
    <property type="interactions" value="38"/>
</dbReference>
<dbReference type="FunCoup" id="Q8N6G6">
    <property type="interactions" value="277"/>
</dbReference>
<dbReference type="IntAct" id="Q8N6G6">
    <property type="interactions" value="7"/>
</dbReference>
<dbReference type="STRING" id="9606.ENSP00000369921"/>
<dbReference type="GlyCosmos" id="Q8N6G6">
    <property type="glycosylation" value="8 sites, 1 glycan"/>
</dbReference>
<dbReference type="GlyGen" id="Q8N6G6">
    <property type="glycosylation" value="19 sites, 1 N-linked glycan (2 sites), 2 O-linked glycans (9 sites)"/>
</dbReference>
<dbReference type="iPTMnet" id="Q8N6G6"/>
<dbReference type="PhosphoSitePlus" id="Q8N6G6"/>
<dbReference type="BioMuta" id="ADAMTSL1"/>
<dbReference type="DMDM" id="298286924"/>
<dbReference type="jPOST" id="Q8N6G6"/>
<dbReference type="MassIVE" id="Q8N6G6"/>
<dbReference type="PaxDb" id="9606-ENSP00000369921"/>
<dbReference type="PeptideAtlas" id="Q8N6G6"/>
<dbReference type="ProteomicsDB" id="72170">
    <molecule id="Q8N6G6-3"/>
</dbReference>
<dbReference type="ProteomicsDB" id="72171">
    <molecule id="Q8N6G6-1"/>
</dbReference>
<dbReference type="ProteomicsDB" id="72172">
    <molecule id="Q8N6G6-2"/>
</dbReference>
<dbReference type="ProteomicsDB" id="72173">
    <molecule id="Q8N6G6-4"/>
</dbReference>
<dbReference type="ProteomicsDB" id="72174">
    <molecule id="Q8N6G6-5"/>
</dbReference>
<dbReference type="ProteomicsDB" id="72175">
    <molecule id="Q8N6G6-6"/>
</dbReference>
<dbReference type="Antibodypedia" id="24655">
    <property type="antibodies" value="164 antibodies from 24 providers"/>
</dbReference>
<dbReference type="DNASU" id="92949"/>
<dbReference type="Ensembl" id="ENST00000276935.6">
    <molecule id="Q8N6G6-4"/>
    <property type="protein sequence ID" value="ENSP00000276935.5"/>
    <property type="gene ID" value="ENSG00000178031.18"/>
</dbReference>
<dbReference type="Ensembl" id="ENST00000327883.11">
    <molecule id="Q8N6G6-1"/>
    <property type="protein sequence ID" value="ENSP00000327887.7"/>
    <property type="gene ID" value="ENSG00000178031.18"/>
</dbReference>
<dbReference type="Ensembl" id="ENST00000380545.9">
    <molecule id="Q8N6G6-6"/>
    <property type="protein sequence ID" value="ENSP00000369918.5"/>
    <property type="gene ID" value="ENSG00000178031.18"/>
</dbReference>
<dbReference type="Ensembl" id="ENST00000380548.9">
    <molecule id="Q8N6G6-3"/>
    <property type="protein sequence ID" value="ENSP00000369921.4"/>
    <property type="gene ID" value="ENSG00000178031.18"/>
</dbReference>
<dbReference type="Ensembl" id="ENST00000380566.8">
    <molecule id="Q8N6G6-2"/>
    <property type="protein sequence ID" value="ENSP00000369940.4"/>
    <property type="gene ID" value="ENSG00000178031.18"/>
</dbReference>
<dbReference type="Ensembl" id="ENST00000542621.5">
    <molecule id="Q8N6G6-5"/>
    <property type="protein sequence ID" value="ENSP00000440472.1"/>
    <property type="gene ID" value="ENSG00000178031.18"/>
</dbReference>
<dbReference type="GeneID" id="92949"/>
<dbReference type="KEGG" id="hsa:92949"/>
<dbReference type="MANE-Select" id="ENST00000380548.9">
    <property type="protein sequence ID" value="ENSP00000369921.4"/>
    <property type="RefSeq nucleotide sequence ID" value="NM_001040272.6"/>
    <property type="RefSeq protein sequence ID" value="NP_001035362.3"/>
</dbReference>
<dbReference type="UCSC" id="uc003znb.4">
    <molecule id="Q8N6G6-3"/>
    <property type="organism name" value="human"/>
</dbReference>
<dbReference type="AGR" id="HGNC:14632"/>
<dbReference type="CTD" id="92949"/>
<dbReference type="DisGeNET" id="92949"/>
<dbReference type="GeneCards" id="ADAMTSL1"/>
<dbReference type="HGNC" id="HGNC:14632">
    <property type="gene designation" value="ADAMTSL1"/>
</dbReference>
<dbReference type="HPA" id="ENSG00000178031">
    <property type="expression patterns" value="Tissue enhanced (endometrium, smooth muscle)"/>
</dbReference>
<dbReference type="MalaCards" id="ADAMTSL1"/>
<dbReference type="MIM" id="609198">
    <property type="type" value="gene"/>
</dbReference>
<dbReference type="neXtProt" id="NX_Q8N6G6"/>
<dbReference type="OpenTargets" id="ENSG00000178031"/>
<dbReference type="Orphanet" id="521445">
    <property type="disease" value="Microcephaly-facial dysmorphism-ocular anomalies-multiple congenital anomalies syndrome"/>
</dbReference>
<dbReference type="PharmGKB" id="PA24554"/>
<dbReference type="VEuPathDB" id="HostDB:ENSG00000178031"/>
<dbReference type="eggNOG" id="KOG3538">
    <property type="taxonomic scope" value="Eukaryota"/>
</dbReference>
<dbReference type="eggNOG" id="KOG4597">
    <property type="taxonomic scope" value="Eukaryota"/>
</dbReference>
<dbReference type="GeneTree" id="ENSGT00940000156243"/>
<dbReference type="HOGENOM" id="CLU_001717_1_0_1"/>
<dbReference type="InParanoid" id="Q8N6G6"/>
<dbReference type="OMA" id="VECVHIR"/>
<dbReference type="OrthoDB" id="5948003at2759"/>
<dbReference type="PAN-GO" id="Q8N6G6">
    <property type="GO annotations" value="0 GO annotations based on evolutionary models"/>
</dbReference>
<dbReference type="PhylomeDB" id="Q8N6G6"/>
<dbReference type="TreeFam" id="TF351125"/>
<dbReference type="PathwayCommons" id="Q8N6G6"/>
<dbReference type="Reactome" id="R-HSA-5083635">
    <property type="pathway name" value="Defective B3GALTL causes PpS"/>
</dbReference>
<dbReference type="Reactome" id="R-HSA-5173214">
    <property type="pathway name" value="O-glycosylation of TSR domain-containing proteins"/>
</dbReference>
<dbReference type="SignaLink" id="Q8N6G6"/>
<dbReference type="BioGRID-ORCS" id="92949">
    <property type="hits" value="12 hits in 1154 CRISPR screens"/>
</dbReference>
<dbReference type="ChiTaRS" id="ADAMTSL1">
    <property type="organism name" value="human"/>
</dbReference>
<dbReference type="GeneWiki" id="ADAMTSL1"/>
<dbReference type="GenomeRNAi" id="92949"/>
<dbReference type="Pharos" id="Q8N6G6">
    <property type="development level" value="Tbio"/>
</dbReference>
<dbReference type="PRO" id="PR:Q8N6G6"/>
<dbReference type="Proteomes" id="UP000005640">
    <property type="component" value="Chromosome 9"/>
</dbReference>
<dbReference type="RNAct" id="Q8N6G6">
    <property type="molecule type" value="protein"/>
</dbReference>
<dbReference type="Bgee" id="ENSG00000178031">
    <property type="expression patterns" value="Expressed in lower esophagus muscularis layer and 124 other cell types or tissues"/>
</dbReference>
<dbReference type="ExpressionAtlas" id="Q8N6G6">
    <property type="expression patterns" value="baseline and differential"/>
</dbReference>
<dbReference type="GO" id="GO:0005788">
    <property type="term" value="C:endoplasmic reticulum lumen"/>
    <property type="evidence" value="ECO:0000304"/>
    <property type="project" value="Reactome"/>
</dbReference>
<dbReference type="GO" id="GO:0005576">
    <property type="term" value="C:extracellular region"/>
    <property type="evidence" value="ECO:0007669"/>
    <property type="project" value="UniProtKB-KW"/>
</dbReference>
<dbReference type="GO" id="GO:0016787">
    <property type="term" value="F:hydrolase activity"/>
    <property type="evidence" value="ECO:0007669"/>
    <property type="project" value="UniProtKB-KW"/>
</dbReference>
<dbReference type="GO" id="GO:0030198">
    <property type="term" value="P:extracellular matrix organization"/>
    <property type="evidence" value="ECO:0007669"/>
    <property type="project" value="InterPro"/>
</dbReference>
<dbReference type="CDD" id="cd00096">
    <property type="entry name" value="Ig"/>
    <property type="match status" value="1"/>
</dbReference>
<dbReference type="FunFam" id="2.20.100.10:FF:000011">
    <property type="entry name" value="A disintegrin and metalloproteinase with thrombospondin motifs 3"/>
    <property type="match status" value="1"/>
</dbReference>
<dbReference type="FunFam" id="2.20.100.10:FF:000005">
    <property type="entry name" value="ADAM metallopeptidase with thrombospondin type 1 motif 9"/>
    <property type="match status" value="1"/>
</dbReference>
<dbReference type="FunFam" id="2.20.100.10:FF:000025">
    <property type="entry name" value="ADAMTS like 1"/>
    <property type="match status" value="1"/>
</dbReference>
<dbReference type="FunFam" id="2.20.100.10:FF:000041">
    <property type="entry name" value="ADAMTS like 1"/>
    <property type="match status" value="1"/>
</dbReference>
<dbReference type="FunFam" id="2.60.120.830:FF:000002">
    <property type="entry name" value="ADAMTS like 1"/>
    <property type="match status" value="1"/>
</dbReference>
<dbReference type="FunFam" id="2.60.40.10:FF:000683">
    <property type="entry name" value="ADAMTS like 1"/>
    <property type="match status" value="1"/>
</dbReference>
<dbReference type="FunFam" id="2.60.40.10:FF:001073">
    <property type="entry name" value="ADAMTS like 1"/>
    <property type="match status" value="1"/>
</dbReference>
<dbReference type="FunFam" id="2.20.100.10:FF:000016">
    <property type="entry name" value="ADAMTS-like 3 isoform 1"/>
    <property type="match status" value="1"/>
</dbReference>
<dbReference type="FunFam" id="2.60.40.10:FF:000487">
    <property type="entry name" value="ADAMTS-like 3 isoform 1"/>
    <property type="match status" value="1"/>
</dbReference>
<dbReference type="FunFam" id="2.60.40.10:FF:000710">
    <property type="entry name" value="ADAMTS-like protein 1"/>
    <property type="match status" value="1"/>
</dbReference>
<dbReference type="FunFam" id="2.20.100.10:FF:000076">
    <property type="entry name" value="ADAMTS-like protein 3"/>
    <property type="match status" value="1"/>
</dbReference>
<dbReference type="FunFam" id="2.20.100.10:FF:000009">
    <property type="entry name" value="ADAMTS-like protein 3 isoform A"/>
    <property type="match status" value="3"/>
</dbReference>
<dbReference type="Gene3D" id="2.60.120.830">
    <property type="match status" value="1"/>
</dbReference>
<dbReference type="Gene3D" id="2.60.40.10">
    <property type="entry name" value="Immunoglobulins"/>
    <property type="match status" value="4"/>
</dbReference>
<dbReference type="Gene3D" id="2.20.100.10">
    <property type="entry name" value="Thrombospondin type-1 (TSP1) repeat"/>
    <property type="match status" value="11"/>
</dbReference>
<dbReference type="InterPro" id="IPR013273">
    <property type="entry name" value="ADAMTS/ADAMTS-like"/>
</dbReference>
<dbReference type="InterPro" id="IPR050439">
    <property type="entry name" value="ADAMTS_ADAMTS-like"/>
</dbReference>
<dbReference type="InterPro" id="IPR045371">
    <property type="entry name" value="ADAMTS_CR_3"/>
</dbReference>
<dbReference type="InterPro" id="IPR010294">
    <property type="entry name" value="ADAMTS_spacer1"/>
</dbReference>
<dbReference type="InterPro" id="IPR056272">
    <property type="entry name" value="ADAMTSL1_dom"/>
</dbReference>
<dbReference type="InterPro" id="IPR007110">
    <property type="entry name" value="Ig-like_dom"/>
</dbReference>
<dbReference type="InterPro" id="IPR036179">
    <property type="entry name" value="Ig-like_dom_sf"/>
</dbReference>
<dbReference type="InterPro" id="IPR013783">
    <property type="entry name" value="Ig-like_fold"/>
</dbReference>
<dbReference type="InterPro" id="IPR013098">
    <property type="entry name" value="Ig_I-set"/>
</dbReference>
<dbReference type="InterPro" id="IPR003599">
    <property type="entry name" value="Ig_sub"/>
</dbReference>
<dbReference type="InterPro" id="IPR003598">
    <property type="entry name" value="Ig_sub2"/>
</dbReference>
<dbReference type="InterPro" id="IPR010909">
    <property type="entry name" value="PLAC"/>
</dbReference>
<dbReference type="InterPro" id="IPR000884">
    <property type="entry name" value="TSP1_rpt"/>
</dbReference>
<dbReference type="InterPro" id="IPR036383">
    <property type="entry name" value="TSP1_rpt_sf"/>
</dbReference>
<dbReference type="PANTHER" id="PTHR13723">
    <property type="entry name" value="ADAMTS A DISINTEGRIN AND METALLOPROTEASE WITH THROMBOSPONDIN MOTIFS PROTEASE"/>
    <property type="match status" value="1"/>
</dbReference>
<dbReference type="PANTHER" id="PTHR13723:SF157">
    <property type="entry name" value="ADAMTS-LIKE PROTEIN 1"/>
    <property type="match status" value="1"/>
</dbReference>
<dbReference type="Pfam" id="PF19236">
    <property type="entry name" value="ADAMTS_CR_3"/>
    <property type="match status" value="1"/>
</dbReference>
<dbReference type="Pfam" id="PF05986">
    <property type="entry name" value="ADAMTS_spacer1"/>
    <property type="match status" value="1"/>
</dbReference>
<dbReference type="Pfam" id="PF24484">
    <property type="entry name" value="ADAMTSL1"/>
    <property type="match status" value="1"/>
</dbReference>
<dbReference type="Pfam" id="PF07679">
    <property type="entry name" value="I-set"/>
    <property type="match status" value="2"/>
</dbReference>
<dbReference type="Pfam" id="PF13927">
    <property type="entry name" value="Ig_3"/>
    <property type="match status" value="2"/>
</dbReference>
<dbReference type="Pfam" id="PF08686">
    <property type="entry name" value="PLAC"/>
    <property type="match status" value="1"/>
</dbReference>
<dbReference type="Pfam" id="PF19030">
    <property type="entry name" value="TSP1_ADAMTS"/>
    <property type="match status" value="11"/>
</dbReference>
<dbReference type="Pfam" id="PF00090">
    <property type="entry name" value="TSP_1"/>
    <property type="match status" value="1"/>
</dbReference>
<dbReference type="PRINTS" id="PR01857">
    <property type="entry name" value="ADAMTSFAMILY"/>
</dbReference>
<dbReference type="SMART" id="SM00409">
    <property type="entry name" value="IG"/>
    <property type="match status" value="4"/>
</dbReference>
<dbReference type="SMART" id="SM00408">
    <property type="entry name" value="IGc2"/>
    <property type="match status" value="4"/>
</dbReference>
<dbReference type="SMART" id="SM00209">
    <property type="entry name" value="TSP1"/>
    <property type="match status" value="13"/>
</dbReference>
<dbReference type="SUPFAM" id="SSF48726">
    <property type="entry name" value="Immunoglobulin"/>
    <property type="match status" value="4"/>
</dbReference>
<dbReference type="SUPFAM" id="SSF82895">
    <property type="entry name" value="TSP-1 type 1 repeat"/>
    <property type="match status" value="11"/>
</dbReference>
<dbReference type="PROSITE" id="PS50835">
    <property type="entry name" value="IG_LIKE"/>
    <property type="match status" value="4"/>
</dbReference>
<dbReference type="PROSITE" id="PS50900">
    <property type="entry name" value="PLAC"/>
    <property type="match status" value="1"/>
</dbReference>
<dbReference type="PROSITE" id="PS50092">
    <property type="entry name" value="TSP1"/>
    <property type="match status" value="9"/>
</dbReference>
<comment type="subunit">
    <text evidence="5">Monomer.</text>
</comment>
<comment type="subcellular location">
    <subcellularLocation>
        <location evidence="5 6 7">Secreted</location>
        <location evidence="5 6 7">Extracellular space</location>
        <location evidence="5 6 7">Extracellular matrix</location>
    </subcellularLocation>
</comment>
<comment type="alternative products">
    <event type="alternative splicing"/>
    <isoform>
        <id>Q8N6G6-3</id>
        <name>3</name>
        <sequence type="displayed"/>
    </isoform>
    <isoform>
        <id>Q8N6G6-1</id>
        <name>1</name>
        <sequence type="described" ref="VSP_039326"/>
    </isoform>
    <isoform>
        <id>Q8N6G6-2</id>
        <name>2</name>
        <sequence type="described" ref="VSP_039323 VSP_039324 VSP_039325"/>
    </isoform>
    <isoform>
        <id>Q8N6G6-4</id>
        <name>4</name>
        <sequence type="described" ref="VSP_039327 VSP_039328"/>
    </isoform>
    <isoform>
        <id>Q8N6G6-5</id>
        <name>5</name>
        <sequence type="described" ref="VSP_039322 VSP_039329 VSP_039330 VSP_039331"/>
    </isoform>
    <isoform>
        <id>Q8N6G6-6</id>
        <name>6</name>
        <sequence type="described" ref="VSP_039322 VSP_039329"/>
    </isoform>
</comment>
<comment type="tissue specificity">
    <text evidence="5">Expressed primarily in adult skeletal muscle.</text>
</comment>
<comment type="PTM">
    <text evidence="5 6 7">C-, N- and O-glycosylated. O-fucosylated by POFUT2 on a serine or a threonine residue found within the consensus sequence C1-X(2)-(S/T)-C2-G of the TSP type-1 repeat domains where C1 and C2 are the first and second cysteine residue of the repeat, respectively. Fucosylated repeats can then be further glycosylated by the addition of a beta-1,3-glucose residue by the glucosyltransferase, B3GALTL. Fucosylation mediates the efficient secretion of ADAMTSL1. Can also be C-glycosylated with one or two mannose molecules on tryptophan residues within the consensus sequence W-X-X-W of the TPRs, and N-glycosylated. These other glycosylations can also facilitate secretion.</text>
</comment>
<comment type="PTM">
    <text>Disulfide bonds are present.</text>
</comment>
<comment type="mass spectrometry">
    <molecule>Isoform 1</molecule>
    <text>The measured range is 28-525.</text>
</comment>
<comment type="miscellaneous">
    <molecule>Isoform 5</molecule>
    <text evidence="13">May be produced at very low levels due to a premature stop codon in the mRNA, leading to nonsense-mediated mRNA decay.</text>
</comment>
<comment type="caution">
    <text evidence="13">Although strongly similar to members of the ADAMTS family it lacks the metalloprotease and disintegrin-like domains which are typical of that family.</text>
</comment>
<comment type="sequence caution" evidence="13">
    <conflict type="frameshift">
        <sequence resource="EMBL-CDS" id="AAI00789"/>
    </conflict>
</comment>
<comment type="sequence caution" evidence="13">
    <conflict type="frameshift">
        <sequence resource="EMBL-CDS" id="AAI00791"/>
    </conflict>
</comment>
<comment type="sequence caution" evidence="13">
    <conflict type="erroneous initiation">
        <sequence resource="EMBL-CDS" id="AAK34948"/>
    </conflict>
    <text>Truncated N-terminus.</text>
</comment>
<organism>
    <name type="scientific">Homo sapiens</name>
    <name type="common">Human</name>
    <dbReference type="NCBI Taxonomy" id="9606"/>
    <lineage>
        <taxon>Eukaryota</taxon>
        <taxon>Metazoa</taxon>
        <taxon>Chordata</taxon>
        <taxon>Craniata</taxon>
        <taxon>Vertebrata</taxon>
        <taxon>Euteleostomi</taxon>
        <taxon>Mammalia</taxon>
        <taxon>Eutheria</taxon>
        <taxon>Euarchontoglires</taxon>
        <taxon>Primates</taxon>
        <taxon>Haplorrhini</taxon>
        <taxon>Catarrhini</taxon>
        <taxon>Hominidae</taxon>
        <taxon>Homo</taxon>
    </lineage>
</organism>
<keyword id="KW-0025">Alternative splicing</keyword>
<keyword id="KW-0903">Direct protein sequencing</keyword>
<keyword id="KW-1015">Disulfide bond</keyword>
<keyword id="KW-0272">Extracellular matrix</keyword>
<keyword id="KW-0325">Glycoprotein</keyword>
<keyword id="KW-0378">Hydrolase</keyword>
<keyword id="KW-0393">Immunoglobulin domain</keyword>
<keyword id="KW-1267">Proteomics identification</keyword>
<keyword id="KW-1185">Reference proteome</keyword>
<keyword id="KW-0677">Repeat</keyword>
<keyword id="KW-0964">Secreted</keyword>
<keyword id="KW-0732">Signal</keyword>
<feature type="signal peptide">
    <location>
        <begin position="1"/>
        <end position="28"/>
    </location>
</feature>
<feature type="chain" id="PRO_0000035860" description="ADAMTS-like protein 1">
    <location>
        <begin position="29"/>
        <end position="1762"/>
    </location>
</feature>
<feature type="domain" description="TSP type-1 1" evidence="2">
    <location>
        <begin position="33"/>
        <end position="82"/>
    </location>
</feature>
<feature type="domain" description="TSP type-1 2" evidence="2">
    <location>
        <begin position="376"/>
        <end position="424"/>
    </location>
</feature>
<feature type="domain" description="TSP type-1 3" evidence="2">
    <location>
        <begin position="436"/>
        <end position="493"/>
    </location>
</feature>
<feature type="domain" description="TSP type-1 4" evidence="2">
    <location>
        <begin position="522"/>
        <end position="584"/>
    </location>
</feature>
<feature type="domain" description="TSP type-1 5" evidence="2">
    <location>
        <begin position="607"/>
        <end position="665"/>
    </location>
</feature>
<feature type="domain" description="TSP type-1 6" evidence="2">
    <location>
        <begin position="666"/>
        <end position="729"/>
    </location>
</feature>
<feature type="domain" description="TSP type-1 7" evidence="2">
    <location>
        <begin position="788"/>
        <end position="850"/>
    </location>
</feature>
<feature type="domain" description="Ig-like C2-type 1">
    <location>
        <begin position="861"/>
        <end position="963"/>
    </location>
</feature>
<feature type="domain" description="Ig-like C2-type 2">
    <location>
        <begin position="1164"/>
        <end position="1266"/>
    </location>
</feature>
<feature type="domain" description="Ig-like C2-type 3">
    <location>
        <begin position="1286"/>
        <end position="1369"/>
    </location>
</feature>
<feature type="domain" description="Ig-like C2-type 4">
    <location>
        <begin position="1395"/>
        <end position="1485"/>
    </location>
</feature>
<feature type="domain" description="TSP type-1 8" evidence="2">
    <location>
        <begin position="1545"/>
        <end position="1608"/>
    </location>
</feature>
<feature type="domain" description="TSP type-1 9" evidence="2">
    <location>
        <begin position="1666"/>
        <end position="1726"/>
    </location>
</feature>
<feature type="domain" description="PLAC" evidence="3">
    <location>
        <begin position="1726"/>
        <end position="1762"/>
    </location>
</feature>
<feature type="region of interest" description="Disordered" evidence="4">
    <location>
        <begin position="1120"/>
        <end position="1164"/>
    </location>
</feature>
<feature type="compositionally biased region" description="Low complexity" evidence="4">
    <location>
        <begin position="1139"/>
        <end position="1151"/>
    </location>
</feature>
<feature type="site" description="Not glycosylated" evidence="7">
    <location>
        <position position="36"/>
    </location>
</feature>
<feature type="glycosylation site" description="C-linked (Man) tryptophan" evidence="7">
    <location>
        <position position="39"/>
    </location>
</feature>
<feature type="glycosylation site" description="C-linked (Man) tryptophan" evidence="7">
    <location>
        <position position="42"/>
    </location>
</feature>
<feature type="glycosylation site" description="O-linked (Fuc...) threonine" evidence="7">
    <location>
        <position position="48"/>
    </location>
</feature>
<feature type="glycosylation site" description="N-linked (GlcNAc...) asparagine" evidence="6">
    <location>
        <position position="251"/>
    </location>
</feature>
<feature type="glycosylation site" description="O-linked (Fuc...) threonine" evidence="6">
    <location>
        <position position="312"/>
    </location>
</feature>
<feature type="glycosylation site" description="O-linked (Fuc...) serine" evidence="6">
    <location>
        <position position="391"/>
    </location>
</feature>
<feature type="glycosylation site" description="O-linked (Fuc...) threonine" evidence="6">
    <location>
        <position position="451"/>
    </location>
</feature>
<feature type="disulfide bond" evidence="1">
    <location>
        <begin position="45"/>
        <end position="76"/>
    </location>
</feature>
<feature type="disulfide bond" evidence="1">
    <location>
        <begin position="49"/>
        <end position="81"/>
    </location>
</feature>
<feature type="disulfide bond" evidence="1">
    <location>
        <begin position="60"/>
        <end position="66"/>
    </location>
</feature>
<feature type="disulfide bond" evidence="1">
    <location>
        <begin position="534"/>
        <end position="578"/>
    </location>
</feature>
<feature type="disulfide bond" evidence="1">
    <location>
        <begin position="538"/>
        <end position="583"/>
    </location>
</feature>
<feature type="disulfide bond" evidence="1">
    <location>
        <begin position="549"/>
        <end position="567"/>
    </location>
</feature>
<feature type="disulfide bond" evidence="1">
    <location>
        <begin position="678"/>
        <end position="723"/>
    </location>
</feature>
<feature type="disulfide bond" evidence="1">
    <location>
        <begin position="682"/>
        <end position="728"/>
    </location>
</feature>
<feature type="disulfide bond" evidence="1">
    <location>
        <begin position="693"/>
        <end position="712"/>
    </location>
</feature>
<feature type="disulfide bond" evidence="1">
    <location>
        <begin position="800"/>
        <end position="844"/>
    </location>
</feature>
<feature type="disulfide bond" evidence="1">
    <location>
        <begin position="804"/>
        <end position="849"/>
    </location>
</feature>
<feature type="disulfide bond" evidence="1">
    <location>
        <begin position="815"/>
        <end position="832"/>
    </location>
</feature>
<feature type="disulfide bond" evidence="1">
    <location>
        <begin position="899"/>
        <end position="947"/>
    </location>
</feature>
<feature type="disulfide bond" evidence="1">
    <location>
        <begin position="1202"/>
        <end position="1250"/>
    </location>
</feature>
<feature type="disulfide bond" evidence="1">
    <location>
        <begin position="1308"/>
        <end position="1353"/>
    </location>
</feature>
<feature type="disulfide bond" evidence="1">
    <location>
        <begin position="1418"/>
        <end position="1469"/>
    </location>
</feature>
<feature type="splice variant" id="VSP_039322" description="In isoform 5 and isoform 6." evidence="9 11">
    <location>
        <begin position="1"/>
        <end position="1299"/>
    </location>
</feature>
<feature type="splice variant" id="VSP_039323" description="In isoform 2." evidence="11">
    <location>
        <begin position="362"/>
        <end position="378"/>
    </location>
</feature>
<feature type="splice variant" id="VSP_039324" description="In isoform 2." evidence="11">
    <original>CTVTCGQGL</original>
    <variation>VTVPSFFVH</variation>
    <location>
        <begin position="448"/>
        <end position="456"/>
    </location>
</feature>
<feature type="splice variant" id="VSP_039325" description="In isoform 2." evidence="11">
    <location>
        <begin position="457"/>
        <end position="1762"/>
    </location>
</feature>
<feature type="splice variant" id="VSP_039326" description="In isoform 1." evidence="8 9 10">
    <location>
        <begin position="526"/>
        <end position="1762"/>
    </location>
</feature>
<feature type="splice variant" id="VSP_039327" description="In isoform 4." evidence="12">
    <original>WEIGKWSPCSLTCG</original>
    <variation>SSIDSAWNACNVLC</variation>
    <location>
        <begin position="670"/>
        <end position="683"/>
    </location>
</feature>
<feature type="splice variant" id="VSP_039328" description="In isoform 4." evidence="12">
    <location>
        <begin position="684"/>
        <end position="1762"/>
    </location>
</feature>
<feature type="splice variant" id="VSP_039329" description="In isoform 5 and isoform 6." evidence="9 11">
    <original>QGVNVTINCQVA</original>
    <variation>MSGVFCFFFFFL</variation>
    <location>
        <begin position="1300"/>
        <end position="1311"/>
    </location>
</feature>
<feature type="splice variant" id="VSP_039330" description="In isoform 5." evidence="9">
    <original>WMVTSWSAC</original>
    <variation>AMGLASGLT</variation>
    <location>
        <begin position="1549"/>
        <end position="1557"/>
    </location>
</feature>
<feature type="splice variant" id="VSP_039331" description="In isoform 5." evidence="9">
    <location>
        <begin position="1558"/>
        <end position="1762"/>
    </location>
</feature>
<feature type="sequence variant" id="VAR_017174" description="In dbSNP:rs776755.">
    <original>S</original>
    <variation>N</variation>
    <location>
        <position position="242"/>
    </location>
</feature>
<feature type="mutagenesis site" description="Small reduction in secretion of ADAMTSL1." evidence="7">
    <original>W</original>
    <variation>A</variation>
    <location>
        <position position="36"/>
    </location>
</feature>
<feature type="mutagenesis site" description="Significant reduction in secretion of ADAMTSL1." evidence="7">
    <original>W</original>
    <variation>A</variation>
    <location>
        <position position="39"/>
    </location>
</feature>
<feature type="mutagenesis site" description="Abolishes secretion of ADAMTSL1." evidence="7">
    <original>W</original>
    <variation>F</variation>
    <location>
        <position position="39"/>
    </location>
</feature>
<feature type="mutagenesis site" description="Modest reduction in secretion of ADAMTSL1." evidence="7">
    <original>W</original>
    <variation>A</variation>
    <location>
        <position position="42"/>
    </location>
</feature>
<feature type="mutagenesis site" description="Abolishes secretion of ADAMTSL1." evidence="7">
    <original>W</original>
    <variation>F</variation>
    <location>
        <position position="42"/>
    </location>
</feature>
<feature type="mutagenesis site" description="Abolishes N-glycosylation. Reduces secretion of ADAMTSL1.">
    <original>N</original>
    <variation>Q</variation>
    <location>
        <position position="251"/>
    </location>
</feature>
<feature type="mutagenesis site" description="Small increase in secretion of ADAMTSL1. About 40% increase in secretion of ADAMTSL1; when associated with A-391. Dramatic increase in secretion of ADAMTSL1; when associated with A-391 and A-451.">
    <original>T</original>
    <variation>A</variation>
    <location>
        <position position="312"/>
    </location>
</feature>
<feature type="mutagenesis site" description="Significant reduction in secretion of ADAMTSL1." evidence="7">
    <original>W</original>
    <variation>A</variation>
    <location>
        <position position="385"/>
    </location>
</feature>
<feature type="mutagenesis site" description="No effect on secretion of ADAMTSL1." evidence="7">
    <original>W</original>
    <variation>F</variation>
    <location>
        <position position="385"/>
    </location>
</feature>
<feature type="mutagenesis site" description="Small increase in secretion of ADAMTSL1. About 40% increase in secretion of ADAMTSL1; when associated with A-312. Dramatic increase in secretion of ADAMTSL1; when associated with A-312 and A-451.">
    <original>S</original>
    <variation>A</variation>
    <location>
        <position position="391"/>
    </location>
</feature>
<feature type="mutagenesis site" description="Modest reduction in secretion of ADAMTSL1." evidence="7">
    <original>W</original>
    <variation>A</variation>
    <location>
        <position position="445"/>
    </location>
</feature>
<feature type="mutagenesis site" description="Small increase in secretion of ADAMTSL1. Dramatic increase in secretion of ADAMTSL1; when associated with A-312 and A-391.">
    <original>T</original>
    <variation>A</variation>
    <location>
        <position position="451"/>
    </location>
</feature>
<feature type="sequence conflict" description="In Ref. 1; AAK84170." evidence="13" ref="1">
    <original>SY</original>
    <variation>AN</variation>
    <location>
        <begin position="54"/>
        <end position="55"/>
    </location>
</feature>
<feature type="sequence conflict" description="In Ref. 2; AAQ88693." evidence="13" ref="2">
    <original>I</original>
    <variation>L</variation>
    <location>
        <position position="208"/>
    </location>
</feature>
<feature type="sequence conflict" description="In Ref. 3; BAC03925." evidence="13" ref="3">
    <original>D</original>
    <variation>G</variation>
    <location>
        <position position="1409"/>
    </location>
</feature>
<name>ATL1_HUMAN</name>
<proteinExistence type="evidence at protein level"/>
<protein>
    <recommendedName>
        <fullName>ADAMTS-like protein 1</fullName>
        <shortName>ADAMTSL-1</shortName>
    </recommendedName>
    <alternativeName>
        <fullName>Punctin-1</fullName>
    </alternativeName>
</protein>
<evidence type="ECO:0000250" key="1"/>
<evidence type="ECO:0000255" key="2">
    <source>
        <dbReference type="PROSITE-ProRule" id="PRU00210"/>
    </source>
</evidence>
<evidence type="ECO:0000255" key="3">
    <source>
        <dbReference type="PROSITE-ProRule" id="PRU00233"/>
    </source>
</evidence>
<evidence type="ECO:0000256" key="4">
    <source>
        <dbReference type="SAM" id="MobiDB-lite"/>
    </source>
</evidence>
<evidence type="ECO:0000269" key="5">
    <source>
    </source>
</evidence>
<evidence type="ECO:0000269" key="6">
    <source>
    </source>
</evidence>
<evidence type="ECO:0000269" key="7">
    <source>
    </source>
</evidence>
<evidence type="ECO:0000303" key="8">
    <source>
    </source>
</evidence>
<evidence type="ECO:0000303" key="9">
    <source>
    </source>
</evidence>
<evidence type="ECO:0000303" key="10">
    <source>
    </source>
</evidence>
<evidence type="ECO:0000303" key="11">
    <source>
    </source>
</evidence>
<evidence type="ECO:0000303" key="12">
    <source ref="7"/>
</evidence>
<evidence type="ECO:0000305" key="13"/>